<protein>
    <recommendedName>
        <fullName>Polymerase basic protein 2</fullName>
        <shortName>PB2</shortName>
    </recommendedName>
    <alternativeName>
        <fullName>Protein 3</fullName>
        <shortName>P3</shortName>
    </alternativeName>
    <alternativeName>
        <fullName>RNA-directed RNA polymerase subunit P3</fullName>
    </alternativeName>
</protein>
<proteinExistence type="evidence at transcript level"/>
<accession>Q6UBL8</accession>
<dbReference type="EMBL" id="AY373381">
    <property type="protein sequence ID" value="AAQ81914.1"/>
    <property type="molecule type" value="mRNA"/>
</dbReference>
<dbReference type="KEGG" id="vg:3170818"/>
<dbReference type="Proteomes" id="UP000008772">
    <property type="component" value="Genome"/>
</dbReference>
<dbReference type="GO" id="GO:0042025">
    <property type="term" value="C:host cell nucleus"/>
    <property type="evidence" value="ECO:0007669"/>
    <property type="project" value="UniProtKB-SubCell"/>
</dbReference>
<dbReference type="GO" id="GO:0044423">
    <property type="term" value="C:virion component"/>
    <property type="evidence" value="ECO:0007669"/>
    <property type="project" value="UniProtKB-KW"/>
</dbReference>
<gene>
    <name evidence="3" type="primary">Segment-1</name>
</gene>
<keyword id="KW-1048">Host nucleus</keyword>
<keyword id="KW-1185">Reference proteome</keyword>
<keyword id="KW-0946">Virion</keyword>
<reference key="1">
    <citation type="submission" date="2003-08" db="EMBL/GenBank/DDBJ databases">
        <authorList>
            <person name="Kibenge F.S."/>
            <person name="Qian B."/>
            <person name="Kibenge M.J."/>
        </authorList>
    </citation>
    <scope>NUCLEOTIDE SEQUENCE [GENOMIC RNA]</scope>
</reference>
<reference key="2">
    <citation type="journal article" date="2003" name="Virus Res.">
        <title>Isolation and characterisation of segment 1 of the infectious salmon anaemia virus genome.</title>
        <authorList>
            <person name="Snow M."/>
            <person name="Ritchie R."/>
            <person name="Arnaud O."/>
            <person name="Villoing S."/>
            <person name="Aspehaug V."/>
            <person name="Cunningham C.O."/>
        </authorList>
    </citation>
    <scope>SUBCELLULAR LOCATION</scope>
</reference>
<reference key="3">
    <citation type="journal article" date="2011" name="Virus Res.">
        <title>Infectious salmon anemia virus--genetics and pathogenesis.</title>
        <authorList>
            <person name="Cottet L."/>
            <person name="Rivas-Aravena A."/>
            <person name="Cortez-San Martin M."/>
            <person name="Sandino A.M."/>
            <person name="Spencer E."/>
        </authorList>
    </citation>
    <scope>REVIEW</scope>
</reference>
<organismHost>
    <name type="scientific">Gadus morhua</name>
    <name type="common">Atlantic cod</name>
    <dbReference type="NCBI Taxonomy" id="8049"/>
</organismHost>
<organismHost>
    <name type="scientific">Oncorhynchus kisutch</name>
    <name type="common">Coho salmon</name>
    <name type="synonym">Salmo kisutch</name>
    <dbReference type="NCBI Taxonomy" id="8019"/>
</organismHost>
<organismHost>
    <name type="scientific">Oncorhynchus mykiss</name>
    <name type="common">Rainbow trout</name>
    <name type="synonym">Salmo gairdneri</name>
    <dbReference type="NCBI Taxonomy" id="8022"/>
</organismHost>
<organismHost>
    <name type="scientific">Pollachius virens</name>
    <name type="common">Saithe</name>
    <name type="synonym">Gadus virens</name>
    <dbReference type="NCBI Taxonomy" id="8060"/>
</organismHost>
<organismHost>
    <name type="scientific">Salmo salar</name>
    <name type="common">Atlantic salmon</name>
    <dbReference type="NCBI Taxonomy" id="8030"/>
</organismHost>
<organismHost>
    <name type="scientific">Salmo trutta</name>
    <name type="common">Brown trout</name>
    <dbReference type="NCBI Taxonomy" id="8032"/>
</organismHost>
<evidence type="ECO:0000250" key="1"/>
<evidence type="ECO:0000269" key="2">
    <source>
    </source>
</evidence>
<evidence type="ECO:0000303" key="3">
    <source>
    </source>
</evidence>
<evidence type="ECO:0000305" key="4"/>
<feature type="chain" id="PRO_0000403917" description="Polymerase basic protein 2">
    <location>
        <begin position="1"/>
        <end position="722"/>
    </location>
</feature>
<organism>
    <name type="scientific">Infectious salmon anemia virus (isolate Atlantic salmon/Norway/810/9/99)</name>
    <name type="common">ISAV</name>
    <dbReference type="NCBI Taxonomy" id="652965"/>
    <lineage>
        <taxon>Viruses</taxon>
        <taxon>Riboviria</taxon>
        <taxon>Orthornavirae</taxon>
        <taxon>Negarnaviricota</taxon>
        <taxon>Polyploviricotina</taxon>
        <taxon>Insthoviricetes</taxon>
        <taxon>Articulavirales</taxon>
        <taxon>Orthomyxoviridae</taxon>
        <taxon>Isavirus</taxon>
        <taxon>Isavirus salaris</taxon>
    </lineage>
</organism>
<name>PB2_ISAV8</name>
<sequence>MDFISENTISDKTTLEELKNATLFQVTKVDDRDCLRARRICNAPKGHWAGLMEKAKAMGDPTEEEKDELKKIVESYNTVSVLGVSKSEGATGPRLVSSLKGLKNLLPGVNPKTLQETLLVGAPCPSTEPTTEEYWNVCRAAVGASMGSAKINMSQKVVMGASVIGWGQLNQSGPGVYFLNTKEIVTAEGKVDETRGPLERTSAPLMRDISRLIQETIEEVETGGDPSFSVRSEGGSKIEGRIAFSLHSEVSTLKMRIALEQKLAKYEYMGENLLTLVKNTSIDRMQPDSAMMGKMVLESLRTHTVSSEQLNGRMITVQSQGLETIAISSPFDVEYDDGYVFTRMKGNFVAVGRDYKGAILCFREGQGTFFSGRGNWSGLMEKCLVEMRLCPCFYSCTWQDYPDKKSLYEKATFEAKQIVFAMGENTGVDIRVNTDGEIGDKGISLLTREREDKYMSKVSYECRVVSGKLVMGLDKMSRVAKGNLEVVREKGDDTSQSDSFYEGVLQVGSMIGTTMESLKQQLQGPVGIWRASGVSAMERCMKRGQSKTVVASARYTFQKMMEKMATGREVSKYSLIIVMRCCIGFTSEANKRALTNISGTGYYISVAQPTVVKLAGEWLITPVGRSKTGEVQYVSAKLKKGMTTGKLELIKKADRSDLDNFPEPSADELLREGTIVLMQIGKDKWLCRVRTGDRRVRTDTDIQRAEAKSQVEKEDLMDEYGV</sequence>
<comment type="function">
    <text evidence="1">Involved in transcription initiation and cap-stealing mechanism, in which cellular capped pre-mRNA are used to generate primers for viral transcription. Binds the cap of the target pre-RNA which is subsequently cleaved by PB1. May play a role in genome replication (By similarity).</text>
</comment>
<comment type="subunit">
    <text evidence="1">The RNA polymerase is composed of three subunits: PB1, PB2 and PA.</text>
</comment>
<comment type="subcellular location">
    <subcellularLocation>
        <location evidence="4">Virion</location>
    </subcellularLocation>
    <subcellularLocation>
        <location evidence="2">Host nucleus</location>
    </subcellularLocation>
</comment>